<sequence>MTIQYYFDLIKPGIVLGNIISAISGFLLATHHEHHINYIILMYMILGTTLVIASSCVLNNIIDRDIDAIMDRTKNRVLAKNINSCFVKNSIIYAIILNTLGFLFLGLTKNLLTILLTMIGFLVYIGIYSLWMKRKSIYSTIIGSISGSMPPIIGYCTVSHTLDTGAWLLFIAFSFWQIPHSYSITIFRSQDYKKASIPTFNIKKGIKLTRIHMILCILIFTLANISLTVLGYTSYTFLYIISIMSIFWLYTGWYQYKQLDNDLKWAKKMFILSIVIITSLNVLLSLDSIFIFY</sequence>
<dbReference type="EC" id="2.5.1.141" evidence="1"/>
<dbReference type="EMBL" id="BX248583">
    <property type="protein sequence ID" value="CAD83312.1"/>
    <property type="molecule type" value="Genomic_DNA"/>
</dbReference>
<dbReference type="SMR" id="Q7VRH6"/>
<dbReference type="STRING" id="203907.Bfl241"/>
<dbReference type="KEGG" id="bfl:Bfl241"/>
<dbReference type="eggNOG" id="COG0109">
    <property type="taxonomic scope" value="Bacteria"/>
</dbReference>
<dbReference type="HOGENOM" id="CLU_029631_0_0_6"/>
<dbReference type="OrthoDB" id="9814417at2"/>
<dbReference type="UniPathway" id="UPA00834">
    <property type="reaction ID" value="UER00712"/>
</dbReference>
<dbReference type="Proteomes" id="UP000002192">
    <property type="component" value="Chromosome"/>
</dbReference>
<dbReference type="GO" id="GO:0005886">
    <property type="term" value="C:plasma membrane"/>
    <property type="evidence" value="ECO:0007669"/>
    <property type="project" value="UniProtKB-SubCell"/>
</dbReference>
<dbReference type="GO" id="GO:0008495">
    <property type="term" value="F:protoheme IX farnesyltransferase activity"/>
    <property type="evidence" value="ECO:0007669"/>
    <property type="project" value="UniProtKB-UniRule"/>
</dbReference>
<dbReference type="GO" id="GO:0048034">
    <property type="term" value="P:heme O biosynthetic process"/>
    <property type="evidence" value="ECO:0007669"/>
    <property type="project" value="UniProtKB-UniRule"/>
</dbReference>
<dbReference type="CDD" id="cd13957">
    <property type="entry name" value="PT_UbiA_Cox10"/>
    <property type="match status" value="1"/>
</dbReference>
<dbReference type="FunFam" id="1.10.357.140:FF:000001">
    <property type="entry name" value="Protoheme IX farnesyltransferase"/>
    <property type="match status" value="1"/>
</dbReference>
<dbReference type="Gene3D" id="1.10.357.140">
    <property type="entry name" value="UbiA prenyltransferase"/>
    <property type="match status" value="1"/>
</dbReference>
<dbReference type="HAMAP" id="MF_00154">
    <property type="entry name" value="CyoE_CtaB"/>
    <property type="match status" value="1"/>
</dbReference>
<dbReference type="InterPro" id="IPR006369">
    <property type="entry name" value="Protohaem_IX_farnesylTrfase"/>
</dbReference>
<dbReference type="InterPro" id="IPR000537">
    <property type="entry name" value="UbiA_prenyltransferase"/>
</dbReference>
<dbReference type="InterPro" id="IPR030470">
    <property type="entry name" value="UbiA_prenylTrfase_CS"/>
</dbReference>
<dbReference type="InterPro" id="IPR044878">
    <property type="entry name" value="UbiA_sf"/>
</dbReference>
<dbReference type="NCBIfam" id="TIGR01473">
    <property type="entry name" value="cyoE_ctaB"/>
    <property type="match status" value="1"/>
</dbReference>
<dbReference type="NCBIfam" id="NF003348">
    <property type="entry name" value="PRK04375.1-1"/>
    <property type="match status" value="1"/>
</dbReference>
<dbReference type="PANTHER" id="PTHR43448">
    <property type="entry name" value="PROTOHEME IX FARNESYLTRANSFERASE, MITOCHONDRIAL"/>
    <property type="match status" value="1"/>
</dbReference>
<dbReference type="PANTHER" id="PTHR43448:SF2">
    <property type="entry name" value="PROTOHEME IX FARNESYLTRANSFERASE, MITOCHONDRIAL"/>
    <property type="match status" value="1"/>
</dbReference>
<dbReference type="Pfam" id="PF01040">
    <property type="entry name" value="UbiA"/>
    <property type="match status" value="1"/>
</dbReference>
<dbReference type="PROSITE" id="PS00943">
    <property type="entry name" value="UBIA"/>
    <property type="match status" value="1"/>
</dbReference>
<accession>Q7VRH6</accession>
<reference key="1">
    <citation type="journal article" date="2003" name="Proc. Natl. Acad. Sci. U.S.A.">
        <title>The genome sequence of Blochmannia floridanus: comparative analysis of reduced genomes.</title>
        <authorList>
            <person name="Gil R."/>
            <person name="Silva F.J."/>
            <person name="Zientz E."/>
            <person name="Delmotte F."/>
            <person name="Gonzalez-Candelas F."/>
            <person name="Latorre A."/>
            <person name="Rausell C."/>
            <person name="Kamerbeek J."/>
            <person name="Gadau J."/>
            <person name="Hoelldobler B."/>
            <person name="van Ham R.C.H.J."/>
            <person name="Gross R."/>
            <person name="Moya A."/>
        </authorList>
    </citation>
    <scope>NUCLEOTIDE SEQUENCE [LARGE SCALE GENOMIC DNA]</scope>
</reference>
<organism>
    <name type="scientific">Blochmanniella floridana</name>
    <dbReference type="NCBI Taxonomy" id="203907"/>
    <lineage>
        <taxon>Bacteria</taxon>
        <taxon>Pseudomonadati</taxon>
        <taxon>Pseudomonadota</taxon>
        <taxon>Gammaproteobacteria</taxon>
        <taxon>Enterobacterales</taxon>
        <taxon>Enterobacteriaceae</taxon>
        <taxon>ant endosymbionts</taxon>
        <taxon>Candidatus Blochmanniella</taxon>
    </lineage>
</organism>
<comment type="function">
    <text evidence="1">Converts heme B (protoheme IX) to heme O by substitution of the vinyl group on carbon 2 of heme B porphyrin ring with a hydroxyethyl farnesyl side group.</text>
</comment>
<comment type="catalytic activity">
    <reaction evidence="1">
        <text>heme b + (2E,6E)-farnesyl diphosphate + H2O = Fe(II)-heme o + diphosphate</text>
        <dbReference type="Rhea" id="RHEA:28070"/>
        <dbReference type="ChEBI" id="CHEBI:15377"/>
        <dbReference type="ChEBI" id="CHEBI:33019"/>
        <dbReference type="ChEBI" id="CHEBI:60344"/>
        <dbReference type="ChEBI" id="CHEBI:60530"/>
        <dbReference type="ChEBI" id="CHEBI:175763"/>
        <dbReference type="EC" id="2.5.1.141"/>
    </reaction>
</comment>
<comment type="pathway">
    <text evidence="1">Porphyrin-containing compound metabolism; heme O biosynthesis; heme O from protoheme: step 1/1.</text>
</comment>
<comment type="subcellular location">
    <subcellularLocation>
        <location evidence="1">Cell inner membrane</location>
        <topology evidence="1">Multi-pass membrane protein</topology>
    </subcellularLocation>
</comment>
<comment type="miscellaneous">
    <text evidence="1">Carbon 2 of the heme B porphyrin ring is defined according to the Fischer nomenclature.</text>
</comment>
<comment type="similarity">
    <text evidence="1">Belongs to the UbiA prenyltransferase family. Protoheme IX farnesyltransferase subfamily.</text>
</comment>
<gene>
    <name evidence="1" type="primary">cyoE</name>
    <name type="ordered locus">Bfl241</name>
</gene>
<evidence type="ECO:0000255" key="1">
    <source>
        <dbReference type="HAMAP-Rule" id="MF_00154"/>
    </source>
</evidence>
<keyword id="KW-0997">Cell inner membrane</keyword>
<keyword id="KW-1003">Cell membrane</keyword>
<keyword id="KW-0350">Heme biosynthesis</keyword>
<keyword id="KW-0472">Membrane</keyword>
<keyword id="KW-1185">Reference proteome</keyword>
<keyword id="KW-0808">Transferase</keyword>
<keyword id="KW-0812">Transmembrane</keyword>
<keyword id="KW-1133">Transmembrane helix</keyword>
<name>CYOE_BLOFL</name>
<proteinExistence type="inferred from homology"/>
<protein>
    <recommendedName>
        <fullName evidence="1">Protoheme IX farnesyltransferase</fullName>
        <ecNumber evidence="1">2.5.1.141</ecNumber>
    </recommendedName>
    <alternativeName>
        <fullName evidence="1">Heme B farnesyltransferase</fullName>
    </alternativeName>
    <alternativeName>
        <fullName evidence="1">Heme O synthase</fullName>
    </alternativeName>
</protein>
<feature type="chain" id="PRO_0000326884" description="Protoheme IX farnesyltransferase">
    <location>
        <begin position="1"/>
        <end position="293"/>
    </location>
</feature>
<feature type="transmembrane region" description="Helical" evidence="1">
    <location>
        <begin position="9"/>
        <end position="29"/>
    </location>
</feature>
<feature type="transmembrane region" description="Helical" evidence="1">
    <location>
        <begin position="38"/>
        <end position="58"/>
    </location>
</feature>
<feature type="transmembrane region" description="Helical" evidence="1">
    <location>
        <begin position="86"/>
        <end position="106"/>
    </location>
</feature>
<feature type="transmembrane region" description="Helical" evidence="1">
    <location>
        <begin position="111"/>
        <end position="131"/>
    </location>
</feature>
<feature type="transmembrane region" description="Helical" evidence="1">
    <location>
        <begin position="137"/>
        <end position="157"/>
    </location>
</feature>
<feature type="transmembrane region" description="Helical" evidence="1">
    <location>
        <begin position="167"/>
        <end position="187"/>
    </location>
</feature>
<feature type="transmembrane region" description="Helical" evidence="1">
    <location>
        <begin position="211"/>
        <end position="231"/>
    </location>
</feature>
<feature type="transmembrane region" description="Helical" evidence="1">
    <location>
        <begin position="234"/>
        <end position="254"/>
    </location>
</feature>
<feature type="transmembrane region" description="Helical" evidence="1">
    <location>
        <begin position="271"/>
        <end position="291"/>
    </location>
</feature>